<dbReference type="EC" id="7.1.1.-" evidence="1"/>
<dbReference type="EMBL" id="CP000393">
    <property type="protein sequence ID" value="ABG52055.1"/>
    <property type="molecule type" value="Genomic_DNA"/>
</dbReference>
<dbReference type="RefSeq" id="WP_011612414.1">
    <property type="nucleotide sequence ID" value="NC_008312.1"/>
</dbReference>
<dbReference type="SMR" id="Q110L9"/>
<dbReference type="STRING" id="203124.Tery_2883"/>
<dbReference type="KEGG" id="ter:Tery_2883"/>
<dbReference type="eggNOG" id="ENOG5031AQM">
    <property type="taxonomic scope" value="Bacteria"/>
</dbReference>
<dbReference type="HOGENOM" id="CLU_137431_0_0_3"/>
<dbReference type="OrthoDB" id="461686at2"/>
<dbReference type="GO" id="GO:0031676">
    <property type="term" value="C:plasma membrane-derived thylakoid membrane"/>
    <property type="evidence" value="ECO:0007669"/>
    <property type="project" value="UniProtKB-SubCell"/>
</dbReference>
<dbReference type="GO" id="GO:0016655">
    <property type="term" value="F:oxidoreductase activity, acting on NAD(P)H, quinone or similar compound as acceptor"/>
    <property type="evidence" value="ECO:0007669"/>
    <property type="project" value="UniProtKB-UniRule"/>
</dbReference>
<dbReference type="GO" id="GO:0048038">
    <property type="term" value="F:quinone binding"/>
    <property type="evidence" value="ECO:0007669"/>
    <property type="project" value="UniProtKB-KW"/>
</dbReference>
<dbReference type="HAMAP" id="MF_01352">
    <property type="entry name" value="NDH1_NDH1M"/>
    <property type="match status" value="1"/>
</dbReference>
<dbReference type="InterPro" id="IPR018922">
    <property type="entry name" value="NdhM"/>
</dbReference>
<dbReference type="PANTHER" id="PTHR36900">
    <property type="entry name" value="NAD(P)H-QUINONE OXIDOREDUCTASE SUBUNIT M, CHLOROPLASTIC"/>
    <property type="match status" value="1"/>
</dbReference>
<dbReference type="PANTHER" id="PTHR36900:SF1">
    <property type="entry name" value="NAD(P)H-QUINONE OXIDOREDUCTASE SUBUNIT M, CHLOROPLASTIC"/>
    <property type="match status" value="1"/>
</dbReference>
<dbReference type="Pfam" id="PF10664">
    <property type="entry name" value="NdhM"/>
    <property type="match status" value="1"/>
</dbReference>
<reference key="1">
    <citation type="journal article" date="2015" name="Proc. Natl. Acad. Sci. U.S.A.">
        <title>Trichodesmium genome maintains abundant, widespread noncoding DNA in situ, despite oligotrophic lifestyle.</title>
        <authorList>
            <person name="Walworth N."/>
            <person name="Pfreundt U."/>
            <person name="Nelson W.C."/>
            <person name="Mincer T."/>
            <person name="Heidelberg J.F."/>
            <person name="Fu F."/>
            <person name="Waterbury J.B."/>
            <person name="Glavina del Rio T."/>
            <person name="Goodwin L."/>
            <person name="Kyrpides N.C."/>
            <person name="Land M.L."/>
            <person name="Woyke T."/>
            <person name="Hutchins D.A."/>
            <person name="Hess W.R."/>
            <person name="Webb E.A."/>
        </authorList>
    </citation>
    <scope>NUCLEOTIDE SEQUENCE [LARGE SCALE GENOMIC DNA]</scope>
    <source>
        <strain>IMS101</strain>
    </source>
</reference>
<keyword id="KW-0472">Membrane</keyword>
<keyword id="KW-0520">NAD</keyword>
<keyword id="KW-0521">NADP</keyword>
<keyword id="KW-0618">Plastoquinone</keyword>
<keyword id="KW-0874">Quinone</keyword>
<keyword id="KW-0793">Thylakoid</keyword>
<keyword id="KW-1278">Translocase</keyword>
<keyword id="KW-0813">Transport</keyword>
<name>NDHM_TRIEI</name>
<comment type="function">
    <text evidence="1">NDH-1 shuttles electrons from an unknown electron donor, via FMN and iron-sulfur (Fe-S) centers, to quinones in the respiratory and/or the photosynthetic chain. The immediate electron acceptor for the enzyme in this species is believed to be plastoquinone. Couples the redox reaction to proton translocation, and thus conserves the redox energy in a proton gradient. Cyanobacterial NDH-1 also plays a role in inorganic carbon-concentration.</text>
</comment>
<comment type="catalytic activity">
    <reaction evidence="1">
        <text>a plastoquinone + NADH + (n+1) H(+)(in) = a plastoquinol + NAD(+) + n H(+)(out)</text>
        <dbReference type="Rhea" id="RHEA:42608"/>
        <dbReference type="Rhea" id="RHEA-COMP:9561"/>
        <dbReference type="Rhea" id="RHEA-COMP:9562"/>
        <dbReference type="ChEBI" id="CHEBI:15378"/>
        <dbReference type="ChEBI" id="CHEBI:17757"/>
        <dbReference type="ChEBI" id="CHEBI:57540"/>
        <dbReference type="ChEBI" id="CHEBI:57945"/>
        <dbReference type="ChEBI" id="CHEBI:62192"/>
    </reaction>
</comment>
<comment type="catalytic activity">
    <reaction evidence="1">
        <text>a plastoquinone + NADPH + (n+1) H(+)(in) = a plastoquinol + NADP(+) + n H(+)(out)</text>
        <dbReference type="Rhea" id="RHEA:42612"/>
        <dbReference type="Rhea" id="RHEA-COMP:9561"/>
        <dbReference type="Rhea" id="RHEA-COMP:9562"/>
        <dbReference type="ChEBI" id="CHEBI:15378"/>
        <dbReference type="ChEBI" id="CHEBI:17757"/>
        <dbReference type="ChEBI" id="CHEBI:57783"/>
        <dbReference type="ChEBI" id="CHEBI:58349"/>
        <dbReference type="ChEBI" id="CHEBI:62192"/>
    </reaction>
</comment>
<comment type="subunit">
    <text evidence="1">NDH-1 can be composed of about 15 different subunits; different subcomplexes with different compositions have been identified which probably have different functions.</text>
</comment>
<comment type="subcellular location">
    <subcellularLocation>
        <location evidence="1">Cellular thylakoid membrane</location>
        <topology evidence="1">Peripheral membrane protein</topology>
        <orientation evidence="1">Cytoplasmic side</orientation>
    </subcellularLocation>
</comment>
<comment type="similarity">
    <text evidence="1">Belongs to the complex I NdhM subunit family.</text>
</comment>
<sequence>MLLKSTTRHIRIFAGTVENNELVPDDQALTLDIDPDNELNWNDTAVEQVYRKFDELVESYSGSDLTEYNLRCMGSDLEHFVRSLLQSGEISYNLGSRVNNYSLGLPRVDVDAEAK</sequence>
<proteinExistence type="inferred from homology"/>
<feature type="chain" id="PRO_0000352210" description="NAD(P)H-quinone oxidoreductase subunit M">
    <location>
        <begin position="1"/>
        <end position="115"/>
    </location>
</feature>
<gene>
    <name evidence="1" type="primary">ndhM</name>
    <name type="ordered locus">Tery_2883</name>
</gene>
<organism>
    <name type="scientific">Trichodesmium erythraeum (strain IMS101)</name>
    <dbReference type="NCBI Taxonomy" id="203124"/>
    <lineage>
        <taxon>Bacteria</taxon>
        <taxon>Bacillati</taxon>
        <taxon>Cyanobacteriota</taxon>
        <taxon>Cyanophyceae</taxon>
        <taxon>Oscillatoriophycideae</taxon>
        <taxon>Oscillatoriales</taxon>
        <taxon>Microcoleaceae</taxon>
        <taxon>Trichodesmium</taxon>
    </lineage>
</organism>
<accession>Q110L9</accession>
<protein>
    <recommendedName>
        <fullName evidence="1">NAD(P)H-quinone oxidoreductase subunit M</fullName>
        <ecNumber evidence="1">7.1.1.-</ecNumber>
    </recommendedName>
    <alternativeName>
        <fullName evidence="1">NAD(P)H dehydrogenase I subunit M</fullName>
        <shortName evidence="1">NDH-1 subunit M</shortName>
        <shortName evidence="1">NDH-M</shortName>
    </alternativeName>
</protein>
<evidence type="ECO:0000255" key="1">
    <source>
        <dbReference type="HAMAP-Rule" id="MF_01352"/>
    </source>
</evidence>